<keyword id="KW-0325">Glycoprotein</keyword>
<keyword id="KW-0472">Membrane</keyword>
<keyword id="KW-1185">Reference proteome</keyword>
<keyword id="KW-0812">Transmembrane</keyword>
<keyword id="KW-1133">Transmembrane helix</keyword>
<name>YL536_MIMIV</name>
<evidence type="ECO:0000255" key="1"/>
<evidence type="ECO:0000305" key="2"/>
<comment type="subcellular location">
    <subcellularLocation>
        <location evidence="2">Membrane</location>
        <topology evidence="2">Single-pass membrane protein</topology>
    </subcellularLocation>
</comment>
<protein>
    <recommendedName>
        <fullName>Uncharacterized protein L536</fullName>
    </recommendedName>
</protein>
<reference key="1">
    <citation type="journal article" date="2004" name="Science">
        <title>The 1.2-megabase genome sequence of Mimivirus.</title>
        <authorList>
            <person name="Raoult D."/>
            <person name="Audic S."/>
            <person name="Robert C."/>
            <person name="Abergel C."/>
            <person name="Renesto P."/>
            <person name="Ogata H."/>
            <person name="La Scola B."/>
            <person name="Susan M."/>
            <person name="Claverie J.-M."/>
        </authorList>
    </citation>
    <scope>NUCLEOTIDE SEQUENCE [LARGE SCALE GENOMIC DNA]</scope>
    <source>
        <strain>Rowbotham-Bradford</strain>
    </source>
</reference>
<accession>Q5UQA0</accession>
<gene>
    <name type="ordered locus">MIMI_L536</name>
</gene>
<sequence>MYGIYIHDELTINDTELSMDKLCSGIVENQSKCIAVSINSSNIISDLNMSVRKIIYKFGTNRYLFYYYNSKWYTDIHHILSLMDLSLGSFISELQKYYPECDLTMWILRGDGMCIHRKLIDLETMTKIILSFNSNFTRCFKAECIYHMAIVYILIMYQIYILSLIRINT</sequence>
<organismHost>
    <name type="scientific">Acanthamoeba polyphaga</name>
    <name type="common">Amoeba</name>
    <dbReference type="NCBI Taxonomy" id="5757"/>
</organismHost>
<proteinExistence type="predicted"/>
<dbReference type="EMBL" id="AY653733">
    <property type="protein sequence ID" value="AAV50800.1"/>
    <property type="molecule type" value="Genomic_DNA"/>
</dbReference>
<dbReference type="KEGG" id="vg:9925168"/>
<dbReference type="Proteomes" id="UP000001134">
    <property type="component" value="Genome"/>
</dbReference>
<dbReference type="GO" id="GO:0016020">
    <property type="term" value="C:membrane"/>
    <property type="evidence" value="ECO:0007669"/>
    <property type="project" value="UniProtKB-SubCell"/>
</dbReference>
<organism>
    <name type="scientific">Acanthamoeba polyphaga mimivirus</name>
    <name type="common">APMV</name>
    <dbReference type="NCBI Taxonomy" id="212035"/>
    <lineage>
        <taxon>Viruses</taxon>
        <taxon>Varidnaviria</taxon>
        <taxon>Bamfordvirae</taxon>
        <taxon>Nucleocytoviricota</taxon>
        <taxon>Megaviricetes</taxon>
        <taxon>Imitervirales</taxon>
        <taxon>Mimiviridae</taxon>
        <taxon>Megamimivirinae</taxon>
        <taxon>Mimivirus</taxon>
        <taxon>Mimivirus bradfordmassiliense</taxon>
    </lineage>
</organism>
<feature type="chain" id="PRO_0000247368" description="Uncharacterized protein L536">
    <location>
        <begin position="1"/>
        <end position="169"/>
    </location>
</feature>
<feature type="transmembrane region" description="Helical" evidence="1">
    <location>
        <begin position="145"/>
        <end position="165"/>
    </location>
</feature>
<feature type="short sequence motif" description="Cell attachment site" evidence="1">
    <location>
        <begin position="109"/>
        <end position="111"/>
    </location>
</feature>
<feature type="glycosylation site" description="N-linked (GlcNAc...) asparagine; by host" evidence="1">
    <location>
        <position position="13"/>
    </location>
</feature>
<feature type="glycosylation site" description="N-linked (GlcNAc...) asparagine; by host" evidence="1">
    <location>
        <position position="29"/>
    </location>
</feature>
<feature type="glycosylation site" description="N-linked (GlcNAc...) asparagine; by host" evidence="1">
    <location>
        <position position="39"/>
    </location>
</feature>
<feature type="glycosylation site" description="N-linked (GlcNAc...) asparagine; by host" evidence="1">
    <location>
        <position position="48"/>
    </location>
</feature>
<feature type="glycosylation site" description="N-linked (GlcNAc...) asparagine; by host" evidence="1">
    <location>
        <position position="135"/>
    </location>
</feature>